<comment type="function">
    <text evidence="1">Synthesizes alpha-1,4-glucan chains using ADP-glucose.</text>
</comment>
<comment type="catalytic activity">
    <reaction evidence="1">
        <text>[(1-&gt;4)-alpha-D-glucosyl](n) + ADP-alpha-D-glucose = [(1-&gt;4)-alpha-D-glucosyl](n+1) + ADP + H(+)</text>
        <dbReference type="Rhea" id="RHEA:18189"/>
        <dbReference type="Rhea" id="RHEA-COMP:9584"/>
        <dbReference type="Rhea" id="RHEA-COMP:9587"/>
        <dbReference type="ChEBI" id="CHEBI:15378"/>
        <dbReference type="ChEBI" id="CHEBI:15444"/>
        <dbReference type="ChEBI" id="CHEBI:57498"/>
        <dbReference type="ChEBI" id="CHEBI:456216"/>
        <dbReference type="EC" id="2.4.1.21"/>
    </reaction>
</comment>
<comment type="pathway">
    <text evidence="1">Glycan biosynthesis; glycogen biosynthesis.</text>
</comment>
<comment type="similarity">
    <text evidence="1">Belongs to the glycosyltransferase 1 family. Bacterial/plant glycogen synthase subfamily.</text>
</comment>
<dbReference type="EC" id="2.4.1.21" evidence="1"/>
<dbReference type="EMBL" id="CP001191">
    <property type="protein sequence ID" value="ACI56617.1"/>
    <property type="molecule type" value="Genomic_DNA"/>
</dbReference>
<dbReference type="RefSeq" id="WP_012558950.1">
    <property type="nucleotide sequence ID" value="NC_011369.1"/>
</dbReference>
<dbReference type="SMR" id="B5ZQ47"/>
<dbReference type="STRING" id="395492.Rleg2_3350"/>
<dbReference type="CAZy" id="GT5">
    <property type="family name" value="Glycosyltransferase Family 5"/>
</dbReference>
<dbReference type="KEGG" id="rlt:Rleg2_3350"/>
<dbReference type="eggNOG" id="COG0297">
    <property type="taxonomic scope" value="Bacteria"/>
</dbReference>
<dbReference type="HOGENOM" id="CLU_009583_18_4_5"/>
<dbReference type="UniPathway" id="UPA00164"/>
<dbReference type="Proteomes" id="UP000008330">
    <property type="component" value="Chromosome"/>
</dbReference>
<dbReference type="GO" id="GO:0005829">
    <property type="term" value="C:cytosol"/>
    <property type="evidence" value="ECO:0007669"/>
    <property type="project" value="TreeGrafter"/>
</dbReference>
<dbReference type="GO" id="GO:0009011">
    <property type="term" value="F:alpha-1,4-glucan glucosyltransferase (ADP-glucose donor) activity"/>
    <property type="evidence" value="ECO:0007669"/>
    <property type="project" value="UniProtKB-UniRule"/>
</dbReference>
<dbReference type="GO" id="GO:0004373">
    <property type="term" value="F:alpha-1,4-glucan glucosyltransferase (UDP-glucose donor) activity"/>
    <property type="evidence" value="ECO:0007669"/>
    <property type="project" value="InterPro"/>
</dbReference>
<dbReference type="GO" id="GO:0005978">
    <property type="term" value="P:glycogen biosynthetic process"/>
    <property type="evidence" value="ECO:0007669"/>
    <property type="project" value="UniProtKB-UniRule"/>
</dbReference>
<dbReference type="CDD" id="cd03791">
    <property type="entry name" value="GT5_Glycogen_synthase_DULL1-like"/>
    <property type="match status" value="1"/>
</dbReference>
<dbReference type="Gene3D" id="3.40.50.2000">
    <property type="entry name" value="Glycogen Phosphorylase B"/>
    <property type="match status" value="2"/>
</dbReference>
<dbReference type="HAMAP" id="MF_00484">
    <property type="entry name" value="Glycogen_synth"/>
    <property type="match status" value="1"/>
</dbReference>
<dbReference type="InterPro" id="IPR001296">
    <property type="entry name" value="Glyco_trans_1"/>
</dbReference>
<dbReference type="InterPro" id="IPR011835">
    <property type="entry name" value="GS/SS"/>
</dbReference>
<dbReference type="InterPro" id="IPR013534">
    <property type="entry name" value="Starch_synth_cat_dom"/>
</dbReference>
<dbReference type="NCBIfam" id="TIGR02095">
    <property type="entry name" value="glgA"/>
    <property type="match status" value="1"/>
</dbReference>
<dbReference type="NCBIfam" id="NF001899">
    <property type="entry name" value="PRK00654.1-2"/>
    <property type="match status" value="1"/>
</dbReference>
<dbReference type="PANTHER" id="PTHR45825:SF11">
    <property type="entry name" value="ALPHA AMYLASE DOMAIN-CONTAINING PROTEIN"/>
    <property type="match status" value="1"/>
</dbReference>
<dbReference type="PANTHER" id="PTHR45825">
    <property type="entry name" value="GRANULE-BOUND STARCH SYNTHASE 1, CHLOROPLASTIC/AMYLOPLASTIC"/>
    <property type="match status" value="1"/>
</dbReference>
<dbReference type="Pfam" id="PF08323">
    <property type="entry name" value="Glyco_transf_5"/>
    <property type="match status" value="1"/>
</dbReference>
<dbReference type="Pfam" id="PF00534">
    <property type="entry name" value="Glycos_transf_1"/>
    <property type="match status" value="1"/>
</dbReference>
<dbReference type="SUPFAM" id="SSF53756">
    <property type="entry name" value="UDP-Glycosyltransferase/glycogen phosphorylase"/>
    <property type="match status" value="1"/>
</dbReference>
<reference key="1">
    <citation type="journal article" date="2010" name="Stand. Genomic Sci.">
        <title>Complete genome sequence of Rhizobium leguminosarum bv trifolii strain WSM2304, an effective microsymbiont of the South American clover Trifolium polymorphum.</title>
        <authorList>
            <person name="Reeve W."/>
            <person name="O'Hara G."/>
            <person name="Chain P."/>
            <person name="Ardley J."/>
            <person name="Brau L."/>
            <person name="Nandesena K."/>
            <person name="Tiwari R."/>
            <person name="Malfatti S."/>
            <person name="Kiss H."/>
            <person name="Lapidus A."/>
            <person name="Copeland A."/>
            <person name="Nolan M."/>
            <person name="Land M."/>
            <person name="Ivanova N."/>
            <person name="Mavromatis K."/>
            <person name="Markowitz V."/>
            <person name="Kyrpides N."/>
            <person name="Melino V."/>
            <person name="Denton M."/>
            <person name="Yates R."/>
            <person name="Howieson J."/>
        </authorList>
    </citation>
    <scope>NUCLEOTIDE SEQUENCE [LARGE SCALE GENOMIC DNA]</scope>
    <source>
        <strain>WSM2304</strain>
    </source>
</reference>
<sequence length="480" mass="52019">MKVLSVSSEVFPLIKTGGLADVSGALPIALKAFGVETKTLLPGYPAVMKVIRDPVVRLEFPDLLGEPAAVLEVQHEGLDLLILDAPAYYDRPGGPYVDPLGKDYPDNWRRFAALSLAASEIAAGLLPGWRPDLVHTHDWQAALTSVYMRYYPTPELPSVLTIHNIAFQGQFGPEIFPGLRLPAHAFATDSIEYYGTVGYLKGGLQTAHAITTVSPTYADEILTPEFGMGLEGVIASHIDNLHGIVNGIDTDIWNPATDPVVHTHYGPTTLKNREENRRSIAEFFHLDNDDAPIFCVISRLTWQKGMDIVANIADEIVAMGGKLVVLGSGEAALEGALLASASRHPGRIGVSIGYNEPMSHLMQAGCDAIIIPSRFEPCGLTQLYGLRYGCVPIVARTGGLNDTVIDANHAALAAKVATGIQFSPVTETGMLQAIRRAMHFYADRKLWTQLQKQGMKSDVSWEKSAERYAALYSSLVSKGM</sequence>
<proteinExistence type="inferred from homology"/>
<evidence type="ECO:0000255" key="1">
    <source>
        <dbReference type="HAMAP-Rule" id="MF_00484"/>
    </source>
</evidence>
<name>GLGA_RHILW</name>
<accession>B5ZQ47</accession>
<feature type="chain" id="PRO_1000126093" description="Glycogen synthase">
    <location>
        <begin position="1"/>
        <end position="480"/>
    </location>
</feature>
<feature type="binding site" evidence="1">
    <location>
        <position position="15"/>
    </location>
    <ligand>
        <name>ADP-alpha-D-glucose</name>
        <dbReference type="ChEBI" id="CHEBI:57498"/>
    </ligand>
</feature>
<keyword id="KW-0320">Glycogen biosynthesis</keyword>
<keyword id="KW-0328">Glycosyltransferase</keyword>
<keyword id="KW-1185">Reference proteome</keyword>
<keyword id="KW-0808">Transferase</keyword>
<organism>
    <name type="scientific">Rhizobium leguminosarum bv. trifolii (strain WSM2304)</name>
    <dbReference type="NCBI Taxonomy" id="395492"/>
    <lineage>
        <taxon>Bacteria</taxon>
        <taxon>Pseudomonadati</taxon>
        <taxon>Pseudomonadota</taxon>
        <taxon>Alphaproteobacteria</taxon>
        <taxon>Hyphomicrobiales</taxon>
        <taxon>Rhizobiaceae</taxon>
        <taxon>Rhizobium/Agrobacterium group</taxon>
        <taxon>Rhizobium</taxon>
    </lineage>
</organism>
<protein>
    <recommendedName>
        <fullName evidence="1">Glycogen synthase</fullName>
        <ecNumber evidence="1">2.4.1.21</ecNumber>
    </recommendedName>
    <alternativeName>
        <fullName evidence="1">Starch [bacterial glycogen] synthase</fullName>
    </alternativeName>
</protein>
<gene>
    <name evidence="1" type="primary">glgA</name>
    <name type="ordered locus">Rleg2_3350</name>
</gene>